<feature type="chain" id="PRO_0000238906" description="Endoribonuclease ysh1">
    <location>
        <begin position="1"/>
        <end position="757"/>
    </location>
</feature>
<feature type="region of interest" description="Disordered" evidence="3">
    <location>
        <begin position="698"/>
        <end position="757"/>
    </location>
</feature>
<feature type="compositionally biased region" description="Acidic residues" evidence="3">
    <location>
        <begin position="702"/>
        <end position="714"/>
    </location>
</feature>
<feature type="compositionally biased region" description="Basic and acidic residues" evidence="3">
    <location>
        <begin position="715"/>
        <end position="757"/>
    </location>
</feature>
<feature type="active site" description="Proton donor" evidence="2">
    <location>
        <position position="403"/>
    </location>
</feature>
<feature type="binding site" evidence="1">
    <location>
        <position position="78"/>
    </location>
    <ligand>
        <name>Zn(2+)</name>
        <dbReference type="ChEBI" id="CHEBI:29105"/>
        <label>1</label>
    </ligand>
</feature>
<feature type="binding site" evidence="1">
    <location>
        <position position="80"/>
    </location>
    <ligand>
        <name>Zn(2+)</name>
        <dbReference type="ChEBI" id="CHEBI:29105"/>
        <label>1</label>
    </ligand>
</feature>
<feature type="binding site" evidence="1">
    <location>
        <position position="82"/>
    </location>
    <ligand>
        <name>Zn(2+)</name>
        <dbReference type="ChEBI" id="CHEBI:29105"/>
        <label>2</label>
    </ligand>
</feature>
<feature type="binding site" evidence="1">
    <location>
        <position position="83"/>
    </location>
    <ligand>
        <name>Zn(2+)</name>
        <dbReference type="ChEBI" id="CHEBI:29105"/>
        <label>2</label>
    </ligand>
</feature>
<feature type="binding site" evidence="1">
    <location>
        <position position="165"/>
    </location>
    <ligand>
        <name>Zn(2+)</name>
        <dbReference type="ChEBI" id="CHEBI:29105"/>
        <label>1</label>
    </ligand>
</feature>
<feature type="binding site" evidence="1">
    <location>
        <position position="186"/>
    </location>
    <ligand>
        <name>Zn(2+)</name>
        <dbReference type="ChEBI" id="CHEBI:29105"/>
        <label>1</label>
    </ligand>
</feature>
<feature type="binding site" evidence="1">
    <location>
        <position position="186"/>
    </location>
    <ligand>
        <name>Zn(2+)</name>
        <dbReference type="ChEBI" id="CHEBI:29105"/>
        <label>2</label>
    </ligand>
</feature>
<feature type="binding site" evidence="1">
    <location>
        <position position="425"/>
    </location>
    <ligand>
        <name>Zn(2+)</name>
        <dbReference type="ChEBI" id="CHEBI:29105"/>
        <label>2</label>
    </ligand>
</feature>
<keyword id="KW-0963">Cytoplasm</keyword>
<keyword id="KW-0255">Endonuclease</keyword>
<keyword id="KW-0378">Hydrolase</keyword>
<keyword id="KW-0479">Metal-binding</keyword>
<keyword id="KW-0507">mRNA processing</keyword>
<keyword id="KW-0540">Nuclease</keyword>
<keyword id="KW-0539">Nucleus</keyword>
<keyword id="KW-1185">Reference proteome</keyword>
<keyword id="KW-0862">Zinc</keyword>
<dbReference type="EC" id="3.1.27.-"/>
<dbReference type="EMBL" id="CU329670">
    <property type="protein sequence ID" value="CAB16227.2"/>
    <property type="molecule type" value="Genomic_DNA"/>
</dbReference>
<dbReference type="PIR" id="T37848">
    <property type="entry name" value="T37848"/>
</dbReference>
<dbReference type="RefSeq" id="NP_594263.2">
    <property type="nucleotide sequence ID" value="NM_001019686.2"/>
</dbReference>
<dbReference type="SMR" id="O13794"/>
<dbReference type="BioGRID" id="278727">
    <property type="interactions" value="15"/>
</dbReference>
<dbReference type="FunCoup" id="O13794">
    <property type="interactions" value="782"/>
</dbReference>
<dbReference type="STRING" id="284812.O13794"/>
<dbReference type="iPTMnet" id="O13794"/>
<dbReference type="PaxDb" id="4896-SPAC17G6.16c.1"/>
<dbReference type="EnsemblFungi" id="SPAC17G6.16c.1">
    <property type="protein sequence ID" value="SPAC17G6.16c.1:pep"/>
    <property type="gene ID" value="SPAC17G6.16c"/>
</dbReference>
<dbReference type="GeneID" id="2542258"/>
<dbReference type="KEGG" id="spo:2542258"/>
<dbReference type="PomBase" id="SPAC17G6.16c">
    <property type="gene designation" value="ysh1"/>
</dbReference>
<dbReference type="VEuPathDB" id="FungiDB:SPAC17G6.16c"/>
<dbReference type="eggNOG" id="KOG1137">
    <property type="taxonomic scope" value="Eukaryota"/>
</dbReference>
<dbReference type="HOGENOM" id="CLU_009673_2_3_1"/>
<dbReference type="InParanoid" id="O13794"/>
<dbReference type="OMA" id="CKQHITL"/>
<dbReference type="Reactome" id="R-SPO-159231">
    <property type="pathway name" value="Transport of Mature mRNA Derived from an Intronless Transcript"/>
</dbReference>
<dbReference type="Reactome" id="R-SPO-77595">
    <property type="pathway name" value="Processing of Intronless Pre-mRNAs"/>
</dbReference>
<dbReference type="PRO" id="PR:O13794"/>
<dbReference type="Proteomes" id="UP000002485">
    <property type="component" value="Chromosome I"/>
</dbReference>
<dbReference type="GO" id="GO:0005829">
    <property type="term" value="C:cytosol"/>
    <property type="evidence" value="ECO:0007005"/>
    <property type="project" value="PomBase"/>
</dbReference>
<dbReference type="GO" id="GO:0005847">
    <property type="term" value="C:mRNA cleavage and polyadenylation specificity factor complex"/>
    <property type="evidence" value="ECO:0000314"/>
    <property type="project" value="PomBase"/>
</dbReference>
<dbReference type="GO" id="GO:0005634">
    <property type="term" value="C:nucleus"/>
    <property type="evidence" value="ECO:0007005"/>
    <property type="project" value="PomBase"/>
</dbReference>
<dbReference type="GO" id="GO:0004534">
    <property type="term" value="F:5'-3' RNA exonuclease activity"/>
    <property type="evidence" value="ECO:0000318"/>
    <property type="project" value="GO_Central"/>
</dbReference>
<dbReference type="GO" id="GO:0046872">
    <property type="term" value="F:metal ion binding"/>
    <property type="evidence" value="ECO:0007669"/>
    <property type="project" value="UniProtKB-KW"/>
</dbReference>
<dbReference type="GO" id="GO:0003723">
    <property type="term" value="F:RNA binding"/>
    <property type="evidence" value="ECO:0000318"/>
    <property type="project" value="GO_Central"/>
</dbReference>
<dbReference type="GO" id="GO:0004521">
    <property type="term" value="F:RNA endonuclease activity"/>
    <property type="evidence" value="ECO:0000318"/>
    <property type="project" value="GO_Central"/>
</dbReference>
<dbReference type="GO" id="GO:0180010">
    <property type="term" value="P:co-transcriptional mRNA 3'-end processing, cleavage and polyadenylation pathway"/>
    <property type="evidence" value="ECO:0000305"/>
    <property type="project" value="PomBase"/>
</dbReference>
<dbReference type="CDD" id="cd16292">
    <property type="entry name" value="CPSF3-like_MBL-fold"/>
    <property type="match status" value="1"/>
</dbReference>
<dbReference type="FunFam" id="3.60.15.10:FF:000001">
    <property type="entry name" value="Cleavage and polyadenylation specificity factor"/>
    <property type="match status" value="1"/>
</dbReference>
<dbReference type="FunFam" id="3.40.50.10890:FF:000001">
    <property type="entry name" value="Cleavage and polyadenylation specificity factor subunit 3"/>
    <property type="match status" value="1"/>
</dbReference>
<dbReference type="Gene3D" id="3.40.50.10890">
    <property type="match status" value="1"/>
</dbReference>
<dbReference type="Gene3D" id="3.60.15.10">
    <property type="entry name" value="Ribonuclease Z/Hydroxyacylglutathione hydrolase-like"/>
    <property type="match status" value="1"/>
</dbReference>
<dbReference type="InterPro" id="IPR022712">
    <property type="entry name" value="Beta_Casp"/>
</dbReference>
<dbReference type="InterPro" id="IPR021718">
    <property type="entry name" value="CPSF73-100_C"/>
</dbReference>
<dbReference type="InterPro" id="IPR050698">
    <property type="entry name" value="MBL"/>
</dbReference>
<dbReference type="InterPro" id="IPR001279">
    <property type="entry name" value="Metallo-B-lactamas"/>
</dbReference>
<dbReference type="InterPro" id="IPR036866">
    <property type="entry name" value="RibonucZ/Hydroxyglut_hydro"/>
</dbReference>
<dbReference type="InterPro" id="IPR011108">
    <property type="entry name" value="RMMBL"/>
</dbReference>
<dbReference type="PANTHER" id="PTHR11203">
    <property type="entry name" value="CLEAVAGE AND POLYADENYLATION SPECIFICITY FACTOR FAMILY MEMBER"/>
    <property type="match status" value="1"/>
</dbReference>
<dbReference type="PANTHER" id="PTHR11203:SF11">
    <property type="entry name" value="CLEAVAGE AND POLYADENYLATION SPECIFICITY FACTOR SUBUNIT 3"/>
    <property type="match status" value="1"/>
</dbReference>
<dbReference type="Pfam" id="PF10996">
    <property type="entry name" value="Beta-Casp"/>
    <property type="match status" value="1"/>
</dbReference>
<dbReference type="Pfam" id="PF11718">
    <property type="entry name" value="CPSF73-100_C"/>
    <property type="match status" value="1"/>
</dbReference>
<dbReference type="Pfam" id="PF16661">
    <property type="entry name" value="Lactamase_B_6"/>
    <property type="match status" value="1"/>
</dbReference>
<dbReference type="Pfam" id="PF07521">
    <property type="entry name" value="RMMBL"/>
    <property type="match status" value="1"/>
</dbReference>
<dbReference type="SMART" id="SM01027">
    <property type="entry name" value="Beta-Casp"/>
    <property type="match status" value="1"/>
</dbReference>
<dbReference type="SMART" id="SM01098">
    <property type="entry name" value="CPSF73-100_C"/>
    <property type="match status" value="1"/>
</dbReference>
<dbReference type="SMART" id="SM00849">
    <property type="entry name" value="Lactamase_B"/>
    <property type="match status" value="1"/>
</dbReference>
<dbReference type="SUPFAM" id="SSF56281">
    <property type="entry name" value="Metallo-hydrolase/oxidoreductase"/>
    <property type="match status" value="1"/>
</dbReference>
<accession>O13794</accession>
<gene>
    <name type="primary">ysh1</name>
    <name type="ORF">SPAC17G6.16c</name>
</gene>
<protein>
    <recommendedName>
        <fullName>Endoribonuclease ysh1</fullName>
        <ecNumber>3.1.27.-</ecNumber>
    </recommendedName>
    <alternativeName>
        <fullName>mRNA 3'-end-processing protein ysh1</fullName>
    </alternativeName>
</protein>
<organism>
    <name type="scientific">Schizosaccharomyces pombe (strain 972 / ATCC 24843)</name>
    <name type="common">Fission yeast</name>
    <dbReference type="NCBI Taxonomy" id="284812"/>
    <lineage>
        <taxon>Eukaryota</taxon>
        <taxon>Fungi</taxon>
        <taxon>Dikarya</taxon>
        <taxon>Ascomycota</taxon>
        <taxon>Taphrinomycotina</taxon>
        <taxon>Schizosaccharomycetes</taxon>
        <taxon>Schizosaccharomycetales</taxon>
        <taxon>Schizosaccharomycetaceae</taxon>
        <taxon>Schizosaccharomyces</taxon>
    </lineage>
</organism>
<reference key="1">
    <citation type="journal article" date="2002" name="Nature">
        <title>The genome sequence of Schizosaccharomyces pombe.</title>
        <authorList>
            <person name="Wood V."/>
            <person name="Gwilliam R."/>
            <person name="Rajandream M.A."/>
            <person name="Lyne M.H."/>
            <person name="Lyne R."/>
            <person name="Stewart A."/>
            <person name="Sgouros J.G."/>
            <person name="Peat N."/>
            <person name="Hayles J."/>
            <person name="Baker S.G."/>
            <person name="Basham D."/>
            <person name="Bowman S."/>
            <person name="Brooks K."/>
            <person name="Brown D."/>
            <person name="Brown S."/>
            <person name="Chillingworth T."/>
            <person name="Churcher C.M."/>
            <person name="Collins M."/>
            <person name="Connor R."/>
            <person name="Cronin A."/>
            <person name="Davis P."/>
            <person name="Feltwell T."/>
            <person name="Fraser A."/>
            <person name="Gentles S."/>
            <person name="Goble A."/>
            <person name="Hamlin N."/>
            <person name="Harris D.E."/>
            <person name="Hidalgo J."/>
            <person name="Hodgson G."/>
            <person name="Holroyd S."/>
            <person name="Hornsby T."/>
            <person name="Howarth S."/>
            <person name="Huckle E.J."/>
            <person name="Hunt S."/>
            <person name="Jagels K."/>
            <person name="James K.D."/>
            <person name="Jones L."/>
            <person name="Jones M."/>
            <person name="Leather S."/>
            <person name="McDonald S."/>
            <person name="McLean J."/>
            <person name="Mooney P."/>
            <person name="Moule S."/>
            <person name="Mungall K.L."/>
            <person name="Murphy L.D."/>
            <person name="Niblett D."/>
            <person name="Odell C."/>
            <person name="Oliver K."/>
            <person name="O'Neil S."/>
            <person name="Pearson D."/>
            <person name="Quail M.A."/>
            <person name="Rabbinowitsch E."/>
            <person name="Rutherford K.M."/>
            <person name="Rutter S."/>
            <person name="Saunders D."/>
            <person name="Seeger K."/>
            <person name="Sharp S."/>
            <person name="Skelton J."/>
            <person name="Simmonds M.N."/>
            <person name="Squares R."/>
            <person name="Squares S."/>
            <person name="Stevens K."/>
            <person name="Taylor K."/>
            <person name="Taylor R.G."/>
            <person name="Tivey A."/>
            <person name="Walsh S.V."/>
            <person name="Warren T."/>
            <person name="Whitehead S."/>
            <person name="Woodward J.R."/>
            <person name="Volckaert G."/>
            <person name="Aert R."/>
            <person name="Robben J."/>
            <person name="Grymonprez B."/>
            <person name="Weltjens I."/>
            <person name="Vanstreels E."/>
            <person name="Rieger M."/>
            <person name="Schaefer M."/>
            <person name="Mueller-Auer S."/>
            <person name="Gabel C."/>
            <person name="Fuchs M."/>
            <person name="Duesterhoeft A."/>
            <person name="Fritzc C."/>
            <person name="Holzer E."/>
            <person name="Moestl D."/>
            <person name="Hilbert H."/>
            <person name="Borzym K."/>
            <person name="Langer I."/>
            <person name="Beck A."/>
            <person name="Lehrach H."/>
            <person name="Reinhardt R."/>
            <person name="Pohl T.M."/>
            <person name="Eger P."/>
            <person name="Zimmermann W."/>
            <person name="Wedler H."/>
            <person name="Wambutt R."/>
            <person name="Purnelle B."/>
            <person name="Goffeau A."/>
            <person name="Cadieu E."/>
            <person name="Dreano S."/>
            <person name="Gloux S."/>
            <person name="Lelaure V."/>
            <person name="Mottier S."/>
            <person name="Galibert F."/>
            <person name="Aves S.J."/>
            <person name="Xiang Z."/>
            <person name="Hunt C."/>
            <person name="Moore K."/>
            <person name="Hurst S.M."/>
            <person name="Lucas M."/>
            <person name="Rochet M."/>
            <person name="Gaillardin C."/>
            <person name="Tallada V.A."/>
            <person name="Garzon A."/>
            <person name="Thode G."/>
            <person name="Daga R.R."/>
            <person name="Cruzado L."/>
            <person name="Jimenez J."/>
            <person name="Sanchez M."/>
            <person name="del Rey F."/>
            <person name="Benito J."/>
            <person name="Dominguez A."/>
            <person name="Revuelta J.L."/>
            <person name="Moreno S."/>
            <person name="Armstrong J."/>
            <person name="Forsburg S.L."/>
            <person name="Cerutti L."/>
            <person name="Lowe T."/>
            <person name="McCombie W.R."/>
            <person name="Paulsen I."/>
            <person name="Potashkin J."/>
            <person name="Shpakovski G.V."/>
            <person name="Ussery D."/>
            <person name="Barrell B.G."/>
            <person name="Nurse P."/>
        </authorList>
    </citation>
    <scope>NUCLEOTIDE SEQUENCE [LARGE SCALE GENOMIC DNA]</scope>
    <source>
        <strain>972 / ATCC 24843</strain>
    </source>
</reference>
<reference key="2">
    <citation type="journal article" date="2011" name="Science">
        <title>Comparative functional genomics of the fission yeasts.</title>
        <authorList>
            <person name="Rhind N."/>
            <person name="Chen Z."/>
            <person name="Yassour M."/>
            <person name="Thompson D.A."/>
            <person name="Haas B.J."/>
            <person name="Habib N."/>
            <person name="Wapinski I."/>
            <person name="Roy S."/>
            <person name="Lin M.F."/>
            <person name="Heiman D.I."/>
            <person name="Young S.K."/>
            <person name="Furuya K."/>
            <person name="Guo Y."/>
            <person name="Pidoux A."/>
            <person name="Chen H.M."/>
            <person name="Robbertse B."/>
            <person name="Goldberg J.M."/>
            <person name="Aoki K."/>
            <person name="Bayne E.H."/>
            <person name="Berlin A.M."/>
            <person name="Desjardins C.A."/>
            <person name="Dobbs E."/>
            <person name="Dukaj L."/>
            <person name="Fan L."/>
            <person name="FitzGerald M.G."/>
            <person name="French C."/>
            <person name="Gujja S."/>
            <person name="Hansen K."/>
            <person name="Keifenheim D."/>
            <person name="Levin J.Z."/>
            <person name="Mosher R.A."/>
            <person name="Mueller C.A."/>
            <person name="Pfiffner J."/>
            <person name="Priest M."/>
            <person name="Russ C."/>
            <person name="Smialowska A."/>
            <person name="Swoboda P."/>
            <person name="Sykes S.M."/>
            <person name="Vaughn M."/>
            <person name="Vengrova S."/>
            <person name="Yoder R."/>
            <person name="Zeng Q."/>
            <person name="Allshire R."/>
            <person name="Baulcombe D."/>
            <person name="Birren B.W."/>
            <person name="Brown W."/>
            <person name="Ekwall K."/>
            <person name="Kellis M."/>
            <person name="Leatherwood J."/>
            <person name="Levin H."/>
            <person name="Margalit H."/>
            <person name="Martienssen R."/>
            <person name="Nieduszynski C.A."/>
            <person name="Spatafora J.W."/>
            <person name="Friedman N."/>
            <person name="Dalgaard J.Z."/>
            <person name="Baumann P."/>
            <person name="Niki H."/>
            <person name="Regev A."/>
            <person name="Nusbaum C."/>
        </authorList>
    </citation>
    <scope>REVISION OF GENE MODEL</scope>
</reference>
<reference key="3">
    <citation type="journal article" date="2006" name="Nat. Biotechnol.">
        <title>ORFeome cloning and global analysis of protein localization in the fission yeast Schizosaccharomyces pombe.</title>
        <authorList>
            <person name="Matsuyama A."/>
            <person name="Arai R."/>
            <person name="Yashiroda Y."/>
            <person name="Shirai A."/>
            <person name="Kamata A."/>
            <person name="Sekido S."/>
            <person name="Kobayashi Y."/>
            <person name="Hashimoto A."/>
            <person name="Hamamoto M."/>
            <person name="Hiraoka Y."/>
            <person name="Horinouchi S."/>
            <person name="Yoshida M."/>
        </authorList>
    </citation>
    <scope>SUBCELLULAR LOCATION [LARGE SCALE ANALYSIS]</scope>
</reference>
<comment type="function">
    <text evidence="1">Component of the cleavage factor I (CF I) involved in pre-mRNA 3'-end processing.</text>
</comment>
<comment type="subcellular location">
    <subcellularLocation>
        <location evidence="4">Cytoplasm</location>
    </subcellularLocation>
    <subcellularLocation>
        <location evidence="4">Nucleus</location>
    </subcellularLocation>
</comment>
<comment type="similarity">
    <text evidence="5">Belongs to the metallo-beta-lactamase superfamily. RNA-metabolizing metallo-beta-lactamase-like family. CPSF2/YSH1 subfamily.</text>
</comment>
<name>YSH1_SCHPO</name>
<evidence type="ECO:0000250" key="1"/>
<evidence type="ECO:0000255" key="2"/>
<evidence type="ECO:0000256" key="3">
    <source>
        <dbReference type="SAM" id="MobiDB-lite"/>
    </source>
</evidence>
<evidence type="ECO:0000269" key="4">
    <source>
    </source>
</evidence>
<evidence type="ECO:0000305" key="5"/>
<proteinExistence type="inferred from homology"/>
<sequence>MSKRKEFDEDAPVDPSDLLEFINLGAGNEVGRSCHVIQYKGKTVMLDAGVHPAYTGLSALPFFDEFDLSTVDVLLISHFHLDHVASLPYVMQKTNFRGRVFMTHPTKAVCKWLLSDYVKVSNVGMEDQLYDEKDLLAAFDRIEAVDYHSTIEVEGIKFTPYHAGHVLGACMYFVEMAGVNILFTGDYSREEDRHLHVAEVPPKRPDVLITESTYGTASHQPRLEKEARLLNIIHSTIRNGGRVLMPVFALGRAQELLLILDEYWNNHLDLRSVPIYYASSLARKCMAIFQTYVNMMNDNIRKIFAERNPFIFRFVKSLRNLEKFDDIGPSVILASPGMLQNGVSRTLLERWAPDPRNTLLLTGYSVEGTMAKQITNEPIEIVSLSGQKIPRRMAVEELSFAAHVDYLQNSEFIDLVNADHIILVHGEQTNMGRLKSALASKFHNRKVDVKVYTPRNCVPLYLPFKGERLVRALGKVAVHKPKEGDIMSGILIQKDANYKLMSAEDLRDFSDLTTTVLTQKQVIPFFSSMELANFHLKQMFGYVKQSKTKAGQPQYTVMDAITLTLIQEHKLALEWVGNIMNDTIADSVITILLGIESSPASVKLTSHKCNHLHSHLDKPPKVSKEEDRIKKLMMFLDNQFGESMTKTEKGVEIKFEKYEASIDFSTMKVECSNEALRSRVVHVLSRAINTILPFSEASQNDVSEDDFENEESDDDKIFEQQTKIEDDVKNENKTEPVEEQKSEEKNEQPNLKKEELS</sequence>